<organism>
    <name type="scientific">Corynebacterium diphtheriae (strain ATCC 700971 / NCTC 13129 / Biotype gravis)</name>
    <dbReference type="NCBI Taxonomy" id="257309"/>
    <lineage>
        <taxon>Bacteria</taxon>
        <taxon>Bacillati</taxon>
        <taxon>Actinomycetota</taxon>
        <taxon>Actinomycetes</taxon>
        <taxon>Mycobacteriales</taxon>
        <taxon>Corynebacteriaceae</taxon>
        <taxon>Corynebacterium</taxon>
    </lineage>
</organism>
<reference key="1">
    <citation type="journal article" date="2003" name="Nucleic Acids Res.">
        <title>The complete genome sequence and analysis of Corynebacterium diphtheriae NCTC13129.</title>
        <authorList>
            <person name="Cerdeno-Tarraga A.-M."/>
            <person name="Efstratiou A."/>
            <person name="Dover L.G."/>
            <person name="Holden M.T.G."/>
            <person name="Pallen M.J."/>
            <person name="Bentley S.D."/>
            <person name="Besra G.S."/>
            <person name="Churcher C.M."/>
            <person name="James K.D."/>
            <person name="De Zoysa A."/>
            <person name="Chillingworth T."/>
            <person name="Cronin A."/>
            <person name="Dowd L."/>
            <person name="Feltwell T."/>
            <person name="Hamlin N."/>
            <person name="Holroyd S."/>
            <person name="Jagels K."/>
            <person name="Moule S."/>
            <person name="Quail M.A."/>
            <person name="Rabbinowitsch E."/>
            <person name="Rutherford K.M."/>
            <person name="Thomson N.R."/>
            <person name="Unwin L."/>
            <person name="Whitehead S."/>
            <person name="Barrell B.G."/>
            <person name="Parkhill J."/>
        </authorList>
    </citation>
    <scope>NUCLEOTIDE SEQUENCE [LARGE SCALE GENOMIC DNA]</scope>
    <source>
        <strain>ATCC 700971 / NCTC 13129 / Biotype gravis</strain>
    </source>
</reference>
<feature type="chain" id="PRO_0000204155" description="Lysine exporter LysE">
    <location>
        <begin position="1"/>
        <end position="228"/>
    </location>
</feature>
<feature type="transmembrane region" description="Helical" evidence="2">
    <location>
        <begin position="4"/>
        <end position="26"/>
    </location>
</feature>
<feature type="transmembrane region" description="Helical" evidence="2">
    <location>
        <begin position="38"/>
        <end position="60"/>
    </location>
</feature>
<feature type="transmembrane region" description="Helical" evidence="2">
    <location>
        <begin position="65"/>
        <end position="87"/>
    </location>
</feature>
<feature type="transmembrane region" description="Helical" evidence="2">
    <location>
        <begin position="139"/>
        <end position="161"/>
    </location>
</feature>
<feature type="transmembrane region" description="Helical" evidence="2">
    <location>
        <begin position="171"/>
        <end position="193"/>
    </location>
</feature>
<feature type="transmembrane region" description="Helical" evidence="2">
    <location>
        <begin position="205"/>
        <end position="227"/>
    </location>
</feature>
<keyword id="KW-0029">Amino-acid transport</keyword>
<keyword id="KW-0997">Cell inner membrane</keyword>
<keyword id="KW-1003">Cell membrane</keyword>
<keyword id="KW-0472">Membrane</keyword>
<keyword id="KW-1185">Reference proteome</keyword>
<keyword id="KW-0812">Transmembrane</keyword>
<keyword id="KW-1133">Transmembrane helix</keyword>
<keyword id="KW-0813">Transport</keyword>
<dbReference type="EMBL" id="BX248357">
    <property type="protein sequence ID" value="CAE49614.1"/>
    <property type="molecule type" value="Genomic_DNA"/>
</dbReference>
<dbReference type="RefSeq" id="WP_010934800.1">
    <property type="nucleotide sequence ID" value="NC_002935.2"/>
</dbReference>
<dbReference type="STRING" id="257309.DIP1091"/>
<dbReference type="KEGG" id="cdi:DIP1091"/>
<dbReference type="HOGENOM" id="CLU_087840_0_0_11"/>
<dbReference type="Proteomes" id="UP000002198">
    <property type="component" value="Chromosome"/>
</dbReference>
<dbReference type="GO" id="GO:0005886">
    <property type="term" value="C:plasma membrane"/>
    <property type="evidence" value="ECO:0007669"/>
    <property type="project" value="UniProtKB-SubCell"/>
</dbReference>
<dbReference type="GO" id="GO:0015171">
    <property type="term" value="F:amino acid transmembrane transporter activity"/>
    <property type="evidence" value="ECO:0007669"/>
    <property type="project" value="TreeGrafter"/>
</dbReference>
<dbReference type="InterPro" id="IPR001123">
    <property type="entry name" value="LeuE-type"/>
</dbReference>
<dbReference type="PANTHER" id="PTHR30086">
    <property type="entry name" value="ARGININE EXPORTER PROTEIN ARGO"/>
    <property type="match status" value="1"/>
</dbReference>
<dbReference type="PANTHER" id="PTHR30086:SF20">
    <property type="entry name" value="ARGININE EXPORTER PROTEIN ARGO-RELATED"/>
    <property type="match status" value="1"/>
</dbReference>
<dbReference type="Pfam" id="PF01810">
    <property type="entry name" value="LysE"/>
    <property type="match status" value="1"/>
</dbReference>
<gene>
    <name type="primary">lysE</name>
    <name type="ordered locus">DIP1091</name>
</gene>
<evidence type="ECO:0000250" key="1">
    <source>
        <dbReference type="UniProtKB" id="P94633"/>
    </source>
</evidence>
<evidence type="ECO:0000255" key="2"/>
<evidence type="ECO:0000305" key="3"/>
<name>LYSE_CORDI</name>
<comment type="function">
    <text evidence="1">Catalyzes the efflux of L-lysine.</text>
</comment>
<comment type="subcellular location">
    <subcellularLocation>
        <location evidence="1">Cell inner membrane</location>
        <topology evidence="2">Multi-pass membrane protein</topology>
    </subcellularLocation>
</comment>
<comment type="similarity">
    <text evidence="3">Belongs to the LysE/ArgO transporter (TC 2.A.75) family.</text>
</comment>
<sequence>MSIAIAGFLMGLSLIVAIGPQNALIIRQGIKREGLIPILVVCILSDVILIFGGTAGVGALVDRAPIALVVLKWLGVAYLLYFGFTCFKEAFKRHGQALAVEQSEPVAYEPVADASSGVITKTRTKAQPKSAQRTWVKPVLAALAFTWLNPAAYIDVLVMLGGIANQHGPDGRWVFALGALCASLTWFPFIGYTSTRFSTVLSRPAVWRYINIAIGIIMMIMCARLIMH</sequence>
<accession>Q6NHP1</accession>
<protein>
    <recommendedName>
        <fullName evidence="1">Lysine exporter LysE</fullName>
    </recommendedName>
</protein>
<proteinExistence type="inferred from homology"/>